<keyword id="KW-0240">DNA-directed RNA polymerase</keyword>
<keyword id="KW-0548">Nucleotidyltransferase</keyword>
<keyword id="KW-1185">Reference proteome</keyword>
<keyword id="KW-0804">Transcription</keyword>
<keyword id="KW-0808">Transferase</keyword>
<keyword id="KW-0946">Virion</keyword>
<dbReference type="EC" id="2.7.7.6"/>
<dbReference type="EMBL" id="AY653733">
    <property type="protein sequence ID" value="AAV50645.1"/>
    <property type="molecule type" value="Genomic_DNA"/>
</dbReference>
<dbReference type="SMR" id="Q5UQW1"/>
<dbReference type="KEGG" id="vg:9924997"/>
<dbReference type="OrthoDB" id="14351at10239"/>
<dbReference type="Proteomes" id="UP000001134">
    <property type="component" value="Genome"/>
</dbReference>
<dbReference type="GO" id="GO:0000428">
    <property type="term" value="C:DNA-directed RNA polymerase complex"/>
    <property type="evidence" value="ECO:0007669"/>
    <property type="project" value="UniProtKB-KW"/>
</dbReference>
<dbReference type="GO" id="GO:0044423">
    <property type="term" value="C:virion component"/>
    <property type="evidence" value="ECO:0007669"/>
    <property type="project" value="UniProtKB-KW"/>
</dbReference>
<dbReference type="GO" id="GO:0003899">
    <property type="term" value="F:DNA-directed RNA polymerase activity"/>
    <property type="evidence" value="ECO:0007669"/>
    <property type="project" value="UniProtKB-EC"/>
</dbReference>
<dbReference type="GO" id="GO:0006351">
    <property type="term" value="P:DNA-templated transcription"/>
    <property type="evidence" value="ECO:0007669"/>
    <property type="project" value="InterPro"/>
</dbReference>
<dbReference type="Gene3D" id="2.40.50.140">
    <property type="entry name" value="Nucleic acid-binding proteins"/>
    <property type="match status" value="1"/>
</dbReference>
<dbReference type="Gene3D" id="3.30.1490.120">
    <property type="entry name" value="RNA polymerase Rpb7-like, N-terminal domain"/>
    <property type="match status" value="1"/>
</dbReference>
<dbReference type="InterPro" id="IPR012340">
    <property type="entry name" value="NA-bd_OB-fold"/>
</dbReference>
<dbReference type="InterPro" id="IPR036898">
    <property type="entry name" value="RNA_pol_Rpb7-like_N_sf"/>
</dbReference>
<dbReference type="InterPro" id="IPR005576">
    <property type="entry name" value="Rpb7-like_N"/>
</dbReference>
<dbReference type="Pfam" id="PF03876">
    <property type="entry name" value="SHS2_Rpb7-N"/>
    <property type="match status" value="1"/>
</dbReference>
<dbReference type="SUPFAM" id="SSF88798">
    <property type="entry name" value="N-terminal, heterodimerisation domain of RBP7 (RpoE)"/>
    <property type="match status" value="1"/>
</dbReference>
<dbReference type="SUPFAM" id="SSF50249">
    <property type="entry name" value="Nucleic acid-binding proteins"/>
    <property type="match status" value="1"/>
</dbReference>
<organismHost>
    <name type="scientific">Acanthamoeba polyphaga</name>
    <name type="common">Amoeba</name>
    <dbReference type="NCBI Taxonomy" id="5757"/>
</organismHost>
<protein>
    <recommendedName>
        <fullName>Putative DNA-directed RNA polymerase subunit L376</fullName>
        <ecNumber>2.7.7.6</ecNumber>
    </recommendedName>
</protein>
<reference key="1">
    <citation type="journal article" date="2004" name="Science">
        <title>The 1.2-megabase genome sequence of Mimivirus.</title>
        <authorList>
            <person name="Raoult D."/>
            <person name="Audic S."/>
            <person name="Robert C."/>
            <person name="Abergel C."/>
            <person name="Renesto P."/>
            <person name="Ogata H."/>
            <person name="La Scola B."/>
            <person name="Susan M."/>
            <person name="Claverie J.-M."/>
        </authorList>
    </citation>
    <scope>NUCLEOTIDE SEQUENCE [GENOMIC DNA]</scope>
    <source>
        <strain>Rowbotham-Bradford</strain>
    </source>
</reference>
<reference key="2">
    <citation type="journal article" date="2006" name="J. Virol.">
        <title>Mimivirus giant particles incorporate a large fraction of anonymous and unique gene products.</title>
        <authorList>
            <person name="Renesto P."/>
            <person name="Abergel C."/>
            <person name="Decloquement P."/>
            <person name="Moinier D."/>
            <person name="Azza S."/>
            <person name="Ogata H."/>
            <person name="Fourquet P."/>
            <person name="Gorvel J.-P."/>
            <person name="Claverie J.-M."/>
            <person name="Raoult D."/>
        </authorList>
    </citation>
    <scope>IDENTIFICATION BY MASS SPECTROMETRY [LARGE SCALE ANALYSIS]</scope>
    <scope>SUBCELLULAR LOCATION</scope>
</reference>
<accession>Q5UQW1</accession>
<feature type="chain" id="PRO_0000253249" description="Putative DNA-directed RNA polymerase subunit L376">
    <location>
        <begin position="1"/>
        <end position="199"/>
    </location>
</feature>
<gene>
    <name type="ordered locus">MIMI_L376</name>
</gene>
<organism>
    <name type="scientific">Acanthamoeba polyphaga mimivirus</name>
    <name type="common">APMV</name>
    <dbReference type="NCBI Taxonomy" id="212035"/>
    <lineage>
        <taxon>Viruses</taxon>
        <taxon>Varidnaviria</taxon>
        <taxon>Bamfordvirae</taxon>
        <taxon>Nucleocytoviricota</taxon>
        <taxon>Megaviricetes</taxon>
        <taxon>Imitervirales</taxon>
        <taxon>Mimiviridae</taxon>
        <taxon>Megamimivirinae</taxon>
        <taxon>Mimivirus</taxon>
        <taxon>Mimivirus bradfordmassiliense</taxon>
    </lineage>
</organism>
<proteinExistence type="evidence at protein level"/>
<evidence type="ECO:0000269" key="1">
    <source>
    </source>
</evidence>
<evidence type="ECO:0000305" key="2"/>
<sequence length="199" mass="22532">MAQQSLYFQTKLEDKVSLLPSQMVGNMENYLLENLEAKVKDKVTEHGIVLKVNRIIEYDYGIISKNNFSGTAIYRVKYECLICSPVKNLSIICLVENIVKGYIIAKNGPVIVAIPFNNIDSDKFQLTNGNIVYKNNSNNIQKGDYVKVSIINIKTNLNEKKITTIAKLLDMATNDEIKSYDNDQLLIVNGDVDDEQEFI</sequence>
<comment type="catalytic activity">
    <reaction>
        <text>RNA(n) + a ribonucleoside 5'-triphosphate = RNA(n+1) + diphosphate</text>
        <dbReference type="Rhea" id="RHEA:21248"/>
        <dbReference type="Rhea" id="RHEA-COMP:14527"/>
        <dbReference type="Rhea" id="RHEA-COMP:17342"/>
        <dbReference type="ChEBI" id="CHEBI:33019"/>
        <dbReference type="ChEBI" id="CHEBI:61557"/>
        <dbReference type="ChEBI" id="CHEBI:140395"/>
        <dbReference type="EC" id="2.7.7.6"/>
    </reaction>
</comment>
<comment type="subcellular location">
    <subcellularLocation>
        <location evidence="1">Virion</location>
    </subcellularLocation>
</comment>
<comment type="similarity">
    <text evidence="2">Belongs to the eukaryotic RPB7/RPC8 RNA polymerase subunit family.</text>
</comment>
<name>YL376_MIMIV</name>